<evidence type="ECO:0000250" key="1"/>
<evidence type="ECO:0000255" key="2"/>
<evidence type="ECO:0000303" key="3">
    <source ref="2"/>
</evidence>
<evidence type="ECO:0000305" key="4"/>
<protein>
    <recommendedName>
        <fullName>Inactive polypeptide N-acetylgalactosaminyltransferase-like protein 5</fullName>
    </recommendedName>
    <alternativeName>
        <fullName>Polypeptide GalNAc transferase 15</fullName>
        <shortName>GalNAc-T15</shortName>
        <shortName>pp-GaNTase 15</shortName>
    </alternativeName>
    <alternativeName>
        <fullName>Protein-UDP acetylgalactosaminyltransferase 15</fullName>
    </alternativeName>
    <alternativeName>
        <fullName>UDP-GalNAc:polypeptide N-acetylgalactosaminyltransferase 15</fullName>
    </alternativeName>
</protein>
<feature type="chain" id="PRO_0000059144" description="Inactive polypeptide N-acetylgalactosaminyltransferase-like protein 5">
    <location>
        <begin position="1"/>
        <end position="443"/>
    </location>
</feature>
<feature type="topological domain" description="Cytoplasmic" evidence="2">
    <location>
        <begin position="1"/>
        <end position="4"/>
    </location>
</feature>
<feature type="transmembrane region" description="Helical; Signal-anchor for type II membrane protein" evidence="2">
    <location>
        <begin position="5"/>
        <end position="27"/>
    </location>
</feature>
<feature type="topological domain" description="Lumenal" evidence="2">
    <location>
        <begin position="28"/>
        <end position="443"/>
    </location>
</feature>
<feature type="region of interest" description="Catalytic subdomain A">
    <location>
        <begin position="133"/>
        <end position="243"/>
    </location>
</feature>
<feature type="region of interest" description="Catalytic subdomain B">
    <location>
        <begin position="301"/>
        <end position="363"/>
    </location>
</feature>
<feature type="binding site" evidence="1">
    <location>
        <position position="174"/>
    </location>
    <ligand>
        <name>substrate</name>
    </ligand>
</feature>
<feature type="binding site" evidence="1">
    <location>
        <position position="204"/>
    </location>
    <ligand>
        <name>substrate</name>
    </ligand>
</feature>
<feature type="binding site" evidence="1">
    <location>
        <position position="227"/>
    </location>
    <ligand>
        <name>Mn(2+)</name>
        <dbReference type="ChEBI" id="CHEBI:29035"/>
    </ligand>
</feature>
<feature type="binding site" evidence="1">
    <location>
        <position position="228"/>
    </location>
    <ligand>
        <name>substrate</name>
    </ligand>
</feature>
<feature type="binding site" evidence="1">
    <location>
        <position position="229"/>
    </location>
    <ligand>
        <name>Mn(2+)</name>
        <dbReference type="ChEBI" id="CHEBI:29035"/>
    </ligand>
</feature>
<feature type="binding site" evidence="1">
    <location>
        <position position="332"/>
    </location>
    <ligand>
        <name>substrate</name>
    </ligand>
</feature>
<feature type="binding site" evidence="1">
    <location>
        <position position="360"/>
    </location>
    <ligand>
        <name>Mn(2+)</name>
        <dbReference type="ChEBI" id="CHEBI:29035"/>
    </ligand>
</feature>
<feature type="glycosylation site" description="N-linked (GlcNAc...) asparagine" evidence="2">
    <location>
        <position position="87"/>
    </location>
</feature>
<feature type="disulfide bond" evidence="1">
    <location>
        <begin position="124"/>
        <end position="355"/>
    </location>
</feature>
<feature type="disulfide bond" evidence="1">
    <location>
        <begin position="346"/>
        <end position="422"/>
    </location>
</feature>
<feature type="splice variant" id="VSP_011229" description="In isoform 2." evidence="3">
    <location>
        <begin position="1"/>
        <end position="70"/>
    </location>
</feature>
<feature type="splice variant" id="VSP_011230" description="In isoform 2." evidence="3">
    <original>KRTDEDKAESTLG</original>
    <variation>MPAQCFLHSLQNC</variation>
    <location>
        <begin position="71"/>
        <end position="83"/>
    </location>
</feature>
<feature type="sequence conflict" description="In Ref. 2; BAB62930/BAB62998." evidence="4" ref="2">
    <original>I</original>
    <variation>F</variation>
    <location>
        <position position="225"/>
    </location>
</feature>
<feature type="sequence conflict" description="In Ref. 2; BAB62930/BAB62998." evidence="4" ref="2">
    <original>R</original>
    <variation>C</variation>
    <location>
        <position position="253"/>
    </location>
</feature>
<accession>Q95JX4</accession>
<accession>Q95K07</accession>
<accession>Q95K42</accession>
<dbReference type="EMBL" id="AB069985">
    <property type="protein sequence ID" value="BAB62930.1"/>
    <property type="molecule type" value="mRNA"/>
</dbReference>
<dbReference type="EMBL" id="AB070020">
    <property type="protein sequence ID" value="BAB62965.1"/>
    <property type="molecule type" value="mRNA"/>
</dbReference>
<dbReference type="EMBL" id="AB070053">
    <property type="protein sequence ID" value="BAB62998.1"/>
    <property type="molecule type" value="mRNA"/>
</dbReference>
<dbReference type="RefSeq" id="NP_001274585.1">
    <property type="nucleotide sequence ID" value="NM_001287656.1"/>
</dbReference>
<dbReference type="RefSeq" id="XP_005551282.1">
    <property type="nucleotide sequence ID" value="XM_005551225.2"/>
</dbReference>
<dbReference type="SMR" id="Q95JX4"/>
<dbReference type="STRING" id="9541.ENSMFAP00000026830"/>
<dbReference type="CAZy" id="GT27">
    <property type="family name" value="Glycosyltransferase Family 27"/>
</dbReference>
<dbReference type="GlyCosmos" id="Q95JX4">
    <property type="glycosylation" value="1 site, No reported glycans"/>
</dbReference>
<dbReference type="eggNOG" id="KOG3736">
    <property type="taxonomic scope" value="Eukaryota"/>
</dbReference>
<dbReference type="Proteomes" id="UP000233100">
    <property type="component" value="Unplaced"/>
</dbReference>
<dbReference type="GO" id="GO:0005794">
    <property type="term" value="C:Golgi apparatus"/>
    <property type="evidence" value="ECO:0007669"/>
    <property type="project" value="TreeGrafter"/>
</dbReference>
<dbReference type="GO" id="GO:0031902">
    <property type="term" value="C:late endosome membrane"/>
    <property type="evidence" value="ECO:0007669"/>
    <property type="project" value="UniProtKB-SubCell"/>
</dbReference>
<dbReference type="GO" id="GO:0046872">
    <property type="term" value="F:metal ion binding"/>
    <property type="evidence" value="ECO:0007669"/>
    <property type="project" value="UniProtKB-KW"/>
</dbReference>
<dbReference type="GO" id="GO:0007286">
    <property type="term" value="P:spermatid development"/>
    <property type="evidence" value="ECO:0000250"/>
    <property type="project" value="UniProtKB"/>
</dbReference>
<dbReference type="CDD" id="cd02510">
    <property type="entry name" value="pp-GalNAc-T"/>
    <property type="match status" value="1"/>
</dbReference>
<dbReference type="FunFam" id="3.90.550.10:FF:000053">
    <property type="entry name" value="Polypeptide N-acetylgalactosaminyltransferase"/>
    <property type="match status" value="1"/>
</dbReference>
<dbReference type="Gene3D" id="3.90.550.10">
    <property type="entry name" value="Spore Coat Polysaccharide Biosynthesis Protein SpsA, Chain A"/>
    <property type="match status" value="1"/>
</dbReference>
<dbReference type="InterPro" id="IPR045885">
    <property type="entry name" value="GalNAc-T"/>
</dbReference>
<dbReference type="InterPro" id="IPR001173">
    <property type="entry name" value="Glyco_trans_2-like"/>
</dbReference>
<dbReference type="InterPro" id="IPR029044">
    <property type="entry name" value="Nucleotide-diphossugar_trans"/>
</dbReference>
<dbReference type="PANTHER" id="PTHR11675:SF17">
    <property type="entry name" value="INACTIVE POLYPEPTIDE N-ACETYLGALACTOSAMINYLTRANSFERASE-LIKE PROTEIN 5"/>
    <property type="match status" value="1"/>
</dbReference>
<dbReference type="PANTHER" id="PTHR11675">
    <property type="entry name" value="N-ACETYLGALACTOSAMINYLTRANSFERASE"/>
    <property type="match status" value="1"/>
</dbReference>
<dbReference type="Pfam" id="PF00535">
    <property type="entry name" value="Glycos_transf_2"/>
    <property type="match status" value="1"/>
</dbReference>
<dbReference type="SUPFAM" id="SSF53448">
    <property type="entry name" value="Nucleotide-diphospho-sugar transferases"/>
    <property type="match status" value="1"/>
</dbReference>
<gene>
    <name type="primary">GALNTL5</name>
    <name type="synonym">GALNT15</name>
    <name type="ORF">QtsA-10105</name>
    <name type="ORF">QtsA-11465</name>
    <name type="ORF">QtsA-12718</name>
</gene>
<sequence>MRNAIIRCLFYGSLTFGIWTALLFIYLHHNHVSNWQKKSHEPLSAWSPGKKVHQQIIYGSDQIPKPHVIVKRTDEDKAESTLGMDFNHTNPELHNELLKYGFNVIISRSLGIEREVPDTRNKMCLQKHYPARLPTASIVICFHNEEFHALFRTVSSVMNLTPHYFLEEIILVDDMSEVDDLKEKLDYHLETFRGKIKIIRNKKREGLIRARLIGASHASGDVLVILDSHCEVNRVWLEPLLHAIAKDPKMVVRPLIDVIDDRTLEYKPSPVVRGAFDWNLQFKWDNVFSYEMDGPEGPTKPIRSPAMSGGIFAIRRHYFNEIGQYDKDMDFWGGENLELSLRIWMCGGQLFIIPCSRVGHISKKQTRKTSAIISATIHNYLRLVHVWLDEYKEQFFLRKPGLKYVTYGNIHERVQLRKRLGCKSFQWYLDNVFPELEASVNRS</sequence>
<keyword id="KW-0025">Alternative splicing</keyword>
<keyword id="KW-0221">Differentiation</keyword>
<keyword id="KW-1015">Disulfide bond</keyword>
<keyword id="KW-0967">Endosome</keyword>
<keyword id="KW-0325">Glycoprotein</keyword>
<keyword id="KW-0464">Manganese</keyword>
<keyword id="KW-0472">Membrane</keyword>
<keyword id="KW-0479">Metal-binding</keyword>
<keyword id="KW-1185">Reference proteome</keyword>
<keyword id="KW-0735">Signal-anchor</keyword>
<keyword id="KW-0744">Spermatogenesis</keyword>
<keyword id="KW-0812">Transmembrane</keyword>
<keyword id="KW-1133">Transmembrane helix</keyword>
<comment type="function">
    <text evidence="1">Probable inactive glycosyltransferase required during spermatid development. May participate in protein loading into the acrosomes and accumulation of ubiquitin-proteasome systems around the head-tail coupling apparatus region (By similarity).</text>
</comment>
<comment type="cofactor">
    <cofactor evidence="1">
        <name>Mn(2+)</name>
        <dbReference type="ChEBI" id="CHEBI:29035"/>
    </cofactor>
</comment>
<comment type="subcellular location">
    <subcellularLocation>
        <location evidence="4">Late endosome membrane</location>
        <topology evidence="4">Single-pass type II membrane protein</topology>
    </subcellularLocation>
    <text evidence="1">Localizes to the juxtanuclear region, possibly the late endosome. Not localized in the Golgi apparatus in round spermatids (By similarity).</text>
</comment>
<comment type="alternative products">
    <event type="alternative splicing"/>
    <isoform>
        <id>Q95JX4-1</id>
        <name>1</name>
        <sequence type="displayed"/>
    </isoform>
    <isoform>
        <id>Q95JX4-2</id>
        <name>2</name>
        <sequence type="described" ref="VSP_011229 VSP_011230"/>
    </isoform>
</comment>
<comment type="tissue specificity">
    <text>Expressed in testis.</text>
</comment>
<comment type="domain">
    <text evidence="1">There are two conserved domains in the glycosyltransferase region: the N-terminal domain (domain A, also called GT1 motif), which is probably involved in manganese coordination and substrate binding and the C-terminal domain (domain B, also called Gal/GalNAc-T motif), which is probably involved in catalytic reaction and UDP-Gal binding.</text>
</comment>
<comment type="similarity">
    <text evidence="4">Belongs to the glycosyltransferase 2 family. GalNAc-T subfamily.</text>
</comment>
<comment type="caution">
    <text evidence="4">In contrast to other members of the family, lacks the C-terminal ricin B-type lectin domain, which contributes to the glycopeptide specificity. The precise function of the enzyme is therefore unsure.</text>
</comment>
<organism>
    <name type="scientific">Macaca fascicularis</name>
    <name type="common">Crab-eating macaque</name>
    <name type="synonym">Cynomolgus monkey</name>
    <dbReference type="NCBI Taxonomy" id="9541"/>
    <lineage>
        <taxon>Eukaryota</taxon>
        <taxon>Metazoa</taxon>
        <taxon>Chordata</taxon>
        <taxon>Craniata</taxon>
        <taxon>Vertebrata</taxon>
        <taxon>Euteleostomi</taxon>
        <taxon>Mammalia</taxon>
        <taxon>Eutheria</taxon>
        <taxon>Euarchontoglires</taxon>
        <taxon>Primates</taxon>
        <taxon>Haplorrhini</taxon>
        <taxon>Catarrhini</taxon>
        <taxon>Cercopithecidae</taxon>
        <taxon>Cercopithecinae</taxon>
        <taxon>Macaca</taxon>
    </lineage>
</organism>
<name>GLTL5_MACFA</name>
<reference key="1">
    <citation type="journal article" date="2002" name="BMC Genomics">
        <title>Cynomolgus monkey testicular cDNAs for discovery of novel human genes in the human genome sequence.</title>
        <authorList>
            <person name="Osada N."/>
            <person name="Hida M."/>
            <person name="Kusuda J."/>
            <person name="Tanuma R."/>
            <person name="Hirata M."/>
            <person name="Suto Y."/>
            <person name="Hirai M."/>
            <person name="Terao K."/>
            <person name="Sugano S."/>
            <person name="Hashimoto K."/>
        </authorList>
    </citation>
    <scope>NUCLEOTIDE SEQUENCE [LARGE SCALE MRNA] (ISOFORM 1)</scope>
    <source>
        <tissue>Testis</tissue>
    </source>
</reference>
<reference key="2">
    <citation type="submission" date="2001-08" db="EMBL/GenBank/DDBJ databases">
        <title>Isolation of novel full-length cDNA clones from macaque testis cDNA libraries.</title>
        <authorList>
            <person name="Hashimoto K."/>
            <person name="Osada N."/>
            <person name="Hida M."/>
            <person name="Kusuda J."/>
            <person name="Tanuma R."/>
            <person name="Hirai M."/>
            <person name="Terao K."/>
            <person name="Sugano S."/>
        </authorList>
    </citation>
    <scope>NUCLEOTIDE SEQUENCE [LARGE SCALE MRNA] (ISOFORMS 1 AND 2)</scope>
    <source>
        <tissue>Testis</tissue>
    </source>
</reference>
<proteinExistence type="evidence at transcript level"/>